<comment type="function">
    <text evidence="1">Has bactericidal activity.</text>
</comment>
<comment type="subcellular location">
    <subcellularLocation>
        <location evidence="1">Secreted</location>
    </subcellularLocation>
</comment>
<comment type="similarity">
    <text evidence="3">Belongs to the beta-defensin family.</text>
</comment>
<sequence>MRLLLSILGVLTLLSILPLARSFLANQECFSEYRHCRMKCKANEYAIRYCADWTICCRVKKREAKKKIMW</sequence>
<dbReference type="EMBL" id="AY621370">
    <property type="protein sequence ID" value="AAT51909.1"/>
    <property type="molecule type" value="mRNA"/>
</dbReference>
<dbReference type="RefSeq" id="NP_001032617.1">
    <property type="nucleotide sequence ID" value="NM_001037528.2"/>
</dbReference>
<dbReference type="SMR" id="Q32ZF3"/>
<dbReference type="STRING" id="10116.ENSRNOP00000055982"/>
<dbReference type="PaxDb" id="10116-ENSRNOP00000055982"/>
<dbReference type="Ensembl" id="ENSRNOT00000059212.2">
    <property type="protein sequence ID" value="ENSRNOP00000055982.1"/>
    <property type="gene ID" value="ENSRNOG00000038759.2"/>
</dbReference>
<dbReference type="GeneID" id="641651"/>
<dbReference type="KEGG" id="rno:641651"/>
<dbReference type="UCSC" id="RGD:1566384">
    <property type="organism name" value="rat"/>
</dbReference>
<dbReference type="AGR" id="RGD:1566384"/>
<dbReference type="CTD" id="654458"/>
<dbReference type="RGD" id="1566384">
    <property type="gene designation" value="Defb43"/>
</dbReference>
<dbReference type="eggNOG" id="ENOG502TEDN">
    <property type="taxonomic scope" value="Eukaryota"/>
</dbReference>
<dbReference type="GeneTree" id="ENSGT00390000001538"/>
<dbReference type="HOGENOM" id="CLU_203372_0_0_1"/>
<dbReference type="InParanoid" id="Q32ZF3"/>
<dbReference type="OMA" id="ICCKLKY"/>
<dbReference type="OrthoDB" id="9524787at2759"/>
<dbReference type="PhylomeDB" id="Q32ZF3"/>
<dbReference type="TreeFam" id="TF341399"/>
<dbReference type="Reactome" id="R-RNO-1461957">
    <property type="pathway name" value="Beta defensins"/>
</dbReference>
<dbReference type="Reactome" id="R-RNO-1461973">
    <property type="pathway name" value="Defensins"/>
</dbReference>
<dbReference type="PRO" id="PR:Q32ZF3"/>
<dbReference type="Proteomes" id="UP000002494">
    <property type="component" value="Chromosome 15"/>
</dbReference>
<dbReference type="Bgee" id="ENSRNOG00000038759">
    <property type="expression patterns" value="Expressed in gonad and 1 other cell type or tissue"/>
</dbReference>
<dbReference type="GO" id="GO:0005615">
    <property type="term" value="C:extracellular space"/>
    <property type="evidence" value="ECO:0000266"/>
    <property type="project" value="RGD"/>
</dbReference>
<dbReference type="GO" id="GO:0042742">
    <property type="term" value="P:defense response to bacterium"/>
    <property type="evidence" value="ECO:0007669"/>
    <property type="project" value="UniProtKB-KW"/>
</dbReference>
<dbReference type="GO" id="GO:0045087">
    <property type="term" value="P:innate immune response"/>
    <property type="evidence" value="ECO:0007669"/>
    <property type="project" value="InterPro"/>
</dbReference>
<dbReference type="InterPro" id="IPR025933">
    <property type="entry name" value="Beta_defensin_dom"/>
</dbReference>
<dbReference type="PANTHER" id="PTHR47900">
    <property type="entry name" value="BETA-DEFENSIN 131A"/>
    <property type="match status" value="1"/>
</dbReference>
<dbReference type="PANTHER" id="PTHR47900:SF1">
    <property type="entry name" value="BETA-DEFENSIN 131A"/>
    <property type="match status" value="1"/>
</dbReference>
<dbReference type="Pfam" id="PF13841">
    <property type="entry name" value="Defensin_beta_2"/>
    <property type="match status" value="1"/>
</dbReference>
<protein>
    <recommendedName>
        <fullName>Beta-defensin 43</fullName>
        <shortName>BD-43</shortName>
    </recommendedName>
    <alternativeName>
        <fullName>Defensin, beta 43</fullName>
    </alternativeName>
</protein>
<evidence type="ECO:0000250" key="1"/>
<evidence type="ECO:0000255" key="2"/>
<evidence type="ECO:0000305" key="3"/>
<reference key="1">
    <citation type="journal article" date="2005" name="Physiol. Genomics">
        <title>Cross-species analysis of the mammalian beta-defensin gene family: presence of syntenic gene clusters and preferential expression in the male reproductive tract.</title>
        <authorList>
            <person name="Patil A.A."/>
            <person name="Cai Y."/>
            <person name="Sang Y."/>
            <person name="Blecha F."/>
            <person name="Zhang G."/>
        </authorList>
    </citation>
    <scope>NUCLEOTIDE SEQUENCE [MRNA]</scope>
</reference>
<feature type="signal peptide" evidence="2">
    <location>
        <begin position="1"/>
        <end position="22"/>
    </location>
</feature>
<feature type="chain" id="PRO_0000352717" description="Beta-defensin 43">
    <location>
        <begin position="23"/>
        <end position="70"/>
    </location>
</feature>
<feature type="disulfide bond" evidence="1">
    <location>
        <begin position="29"/>
        <end position="57"/>
    </location>
</feature>
<feature type="disulfide bond" evidence="1">
    <location>
        <begin position="36"/>
        <end position="50"/>
    </location>
</feature>
<name>DFB43_RAT</name>
<accession>Q32ZF3</accession>
<gene>
    <name type="primary">Defb43</name>
</gene>
<keyword id="KW-0044">Antibiotic</keyword>
<keyword id="KW-0929">Antimicrobial</keyword>
<keyword id="KW-0211">Defensin</keyword>
<keyword id="KW-1015">Disulfide bond</keyword>
<keyword id="KW-1185">Reference proteome</keyword>
<keyword id="KW-0964">Secreted</keyword>
<keyword id="KW-0732">Signal</keyword>
<organism>
    <name type="scientific">Rattus norvegicus</name>
    <name type="common">Rat</name>
    <dbReference type="NCBI Taxonomy" id="10116"/>
    <lineage>
        <taxon>Eukaryota</taxon>
        <taxon>Metazoa</taxon>
        <taxon>Chordata</taxon>
        <taxon>Craniata</taxon>
        <taxon>Vertebrata</taxon>
        <taxon>Euteleostomi</taxon>
        <taxon>Mammalia</taxon>
        <taxon>Eutheria</taxon>
        <taxon>Euarchontoglires</taxon>
        <taxon>Glires</taxon>
        <taxon>Rodentia</taxon>
        <taxon>Myomorpha</taxon>
        <taxon>Muroidea</taxon>
        <taxon>Muridae</taxon>
        <taxon>Murinae</taxon>
        <taxon>Rattus</taxon>
    </lineage>
</organism>
<proteinExistence type="inferred from homology"/>